<name>LOLA_ERWT9</name>
<evidence type="ECO:0000255" key="1">
    <source>
        <dbReference type="HAMAP-Rule" id="MF_00240"/>
    </source>
</evidence>
<evidence type="ECO:0000256" key="2">
    <source>
        <dbReference type="SAM" id="MobiDB-lite"/>
    </source>
</evidence>
<keyword id="KW-0143">Chaperone</keyword>
<keyword id="KW-0574">Periplasm</keyword>
<keyword id="KW-0653">Protein transport</keyword>
<keyword id="KW-1185">Reference proteome</keyword>
<keyword id="KW-0732">Signal</keyword>
<keyword id="KW-0813">Transport</keyword>
<comment type="function">
    <text evidence="1">Participates in the translocation of lipoproteins from the inner membrane to the outer membrane. Only forms a complex with a lipoprotein if the residue after the N-terminal Cys is not an aspartate (The Asp acts as a targeting signal to indicate that the lipoprotein should stay in the inner membrane).</text>
</comment>
<comment type="subunit">
    <text evidence="1">Monomer.</text>
</comment>
<comment type="subcellular location">
    <subcellularLocation>
        <location evidence="1">Periplasm</location>
    </subcellularLocation>
</comment>
<comment type="similarity">
    <text evidence="1">Belongs to the LolA family.</text>
</comment>
<gene>
    <name evidence="1" type="primary">lolA</name>
    <name type="ordered locus">ETA_21530</name>
</gene>
<sequence>MKKLIISCCLLATFSAAGAWADAAGDLQQRLDKVKSFHATFSQKVTDGSGTSVQDGEGEMWVQRPNLFNWHMITPDESILISDGKTLWFYNPFVEQASASLLKDATSNTPFMLIARNQASDWKQYHVAQKGDDFSLTPKSADGNLKQFTINVAQNGTINQFSAVEQDGQRSNYALKSQQSGPISADKFKFRPPKGVTVDDQRQ</sequence>
<protein>
    <recommendedName>
        <fullName evidence="1">Outer-membrane lipoprotein carrier protein</fullName>
    </recommendedName>
</protein>
<proteinExistence type="inferred from homology"/>
<accession>B2VC57</accession>
<dbReference type="EMBL" id="CU468135">
    <property type="protein sequence ID" value="CAO97199.1"/>
    <property type="molecule type" value="Genomic_DNA"/>
</dbReference>
<dbReference type="RefSeq" id="WP_012441870.1">
    <property type="nucleotide sequence ID" value="NC_010694.1"/>
</dbReference>
<dbReference type="SMR" id="B2VC57"/>
<dbReference type="STRING" id="465817.ETA_21530"/>
<dbReference type="KEGG" id="eta:ETA_21530"/>
<dbReference type="eggNOG" id="COG2834">
    <property type="taxonomic scope" value="Bacteria"/>
</dbReference>
<dbReference type="HOGENOM" id="CLU_087560_1_1_6"/>
<dbReference type="OrthoDB" id="9787361at2"/>
<dbReference type="Proteomes" id="UP000001726">
    <property type="component" value="Chromosome"/>
</dbReference>
<dbReference type="GO" id="GO:0030288">
    <property type="term" value="C:outer membrane-bounded periplasmic space"/>
    <property type="evidence" value="ECO:0007669"/>
    <property type="project" value="TreeGrafter"/>
</dbReference>
<dbReference type="GO" id="GO:0044874">
    <property type="term" value="P:lipoprotein localization to outer membrane"/>
    <property type="evidence" value="ECO:0007669"/>
    <property type="project" value="UniProtKB-UniRule"/>
</dbReference>
<dbReference type="GO" id="GO:0042953">
    <property type="term" value="P:lipoprotein transport"/>
    <property type="evidence" value="ECO:0007669"/>
    <property type="project" value="InterPro"/>
</dbReference>
<dbReference type="CDD" id="cd16325">
    <property type="entry name" value="LolA"/>
    <property type="match status" value="1"/>
</dbReference>
<dbReference type="FunFam" id="2.50.20.10:FF:000001">
    <property type="entry name" value="Outer-membrane lipoprotein carrier protein"/>
    <property type="match status" value="1"/>
</dbReference>
<dbReference type="Gene3D" id="2.50.20.10">
    <property type="entry name" value="Lipoprotein localisation LolA/LolB/LppX"/>
    <property type="match status" value="1"/>
</dbReference>
<dbReference type="HAMAP" id="MF_00240">
    <property type="entry name" value="LolA"/>
    <property type="match status" value="1"/>
</dbReference>
<dbReference type="InterPro" id="IPR029046">
    <property type="entry name" value="LolA/LolB/LppX"/>
</dbReference>
<dbReference type="InterPro" id="IPR004564">
    <property type="entry name" value="OM_lipoprot_carrier_LolA-like"/>
</dbReference>
<dbReference type="InterPro" id="IPR018323">
    <property type="entry name" value="OM_lipoprot_carrier_LolA_Pbac"/>
</dbReference>
<dbReference type="NCBIfam" id="TIGR00547">
    <property type="entry name" value="lolA"/>
    <property type="match status" value="1"/>
</dbReference>
<dbReference type="PANTHER" id="PTHR35869">
    <property type="entry name" value="OUTER-MEMBRANE LIPOPROTEIN CARRIER PROTEIN"/>
    <property type="match status" value="1"/>
</dbReference>
<dbReference type="PANTHER" id="PTHR35869:SF1">
    <property type="entry name" value="OUTER-MEMBRANE LIPOPROTEIN CARRIER PROTEIN"/>
    <property type="match status" value="1"/>
</dbReference>
<dbReference type="Pfam" id="PF03548">
    <property type="entry name" value="LolA"/>
    <property type="match status" value="1"/>
</dbReference>
<dbReference type="SUPFAM" id="SSF89392">
    <property type="entry name" value="Prokaryotic lipoproteins and lipoprotein localization factors"/>
    <property type="match status" value="1"/>
</dbReference>
<organism>
    <name type="scientific">Erwinia tasmaniensis (strain DSM 17950 / CFBP 7177 / CIP 109463 / NCPPB 4357 / Et1/99)</name>
    <dbReference type="NCBI Taxonomy" id="465817"/>
    <lineage>
        <taxon>Bacteria</taxon>
        <taxon>Pseudomonadati</taxon>
        <taxon>Pseudomonadota</taxon>
        <taxon>Gammaproteobacteria</taxon>
        <taxon>Enterobacterales</taxon>
        <taxon>Erwiniaceae</taxon>
        <taxon>Erwinia</taxon>
    </lineage>
</organism>
<reference key="1">
    <citation type="journal article" date="2008" name="Environ. Microbiol.">
        <title>The genome of Erwinia tasmaniensis strain Et1/99, a non-pathogenic bacterium in the genus Erwinia.</title>
        <authorList>
            <person name="Kube M."/>
            <person name="Migdoll A.M."/>
            <person name="Mueller I."/>
            <person name="Kuhl H."/>
            <person name="Beck A."/>
            <person name="Reinhardt R."/>
            <person name="Geider K."/>
        </authorList>
    </citation>
    <scope>NUCLEOTIDE SEQUENCE [LARGE SCALE GENOMIC DNA]</scope>
    <source>
        <strain>DSM 17950 / CFBP 7177 / CIP 109463 / NCPPB 4357 / Et1/99</strain>
    </source>
</reference>
<feature type="signal peptide" evidence="1">
    <location>
        <begin position="1"/>
        <end position="21"/>
    </location>
</feature>
<feature type="chain" id="PRO_1000100718" description="Outer-membrane lipoprotein carrier protein">
    <location>
        <begin position="22"/>
        <end position="203"/>
    </location>
</feature>
<feature type="region of interest" description="Disordered" evidence="2">
    <location>
        <begin position="174"/>
        <end position="203"/>
    </location>
</feature>